<feature type="chain" id="PRO_0000125585" description="U7 snRNA-associated Sm-like protein LSm10">
    <location>
        <begin position="1"/>
        <end position="123"/>
    </location>
</feature>
<feature type="domain" description="Sm" evidence="1">
    <location>
        <begin position="16"/>
        <end position="88"/>
    </location>
</feature>
<feature type="helix" evidence="6">
    <location>
        <begin position="7"/>
        <end position="14"/>
    </location>
</feature>
<feature type="helix" evidence="6">
    <location>
        <begin position="18"/>
        <end position="21"/>
    </location>
</feature>
<feature type="turn" evidence="6">
    <location>
        <begin position="22"/>
        <end position="26"/>
    </location>
</feature>
<feature type="strand" evidence="6">
    <location>
        <begin position="30"/>
        <end position="32"/>
    </location>
</feature>
<feature type="strand" evidence="6">
    <location>
        <begin position="41"/>
        <end position="44"/>
    </location>
</feature>
<feature type="strand" evidence="6">
    <location>
        <begin position="52"/>
        <end position="56"/>
    </location>
</feature>
<feature type="strand" evidence="6">
    <location>
        <begin position="58"/>
        <end position="60"/>
    </location>
</feature>
<feature type="strand" evidence="6">
    <location>
        <begin position="66"/>
        <end position="68"/>
    </location>
</feature>
<feature type="strand" evidence="6">
    <location>
        <begin position="72"/>
        <end position="74"/>
    </location>
</feature>
<feature type="strand" evidence="6">
    <location>
        <begin position="76"/>
        <end position="78"/>
    </location>
</feature>
<feature type="strand" evidence="6">
    <location>
        <begin position="81"/>
        <end position="83"/>
    </location>
</feature>
<feature type="helix" evidence="6">
    <location>
        <begin position="90"/>
        <end position="105"/>
    </location>
</feature>
<organism>
    <name type="scientific">Homo sapiens</name>
    <name type="common">Human</name>
    <dbReference type="NCBI Taxonomy" id="9606"/>
    <lineage>
        <taxon>Eukaryota</taxon>
        <taxon>Metazoa</taxon>
        <taxon>Chordata</taxon>
        <taxon>Craniata</taxon>
        <taxon>Vertebrata</taxon>
        <taxon>Euteleostomi</taxon>
        <taxon>Mammalia</taxon>
        <taxon>Eutheria</taxon>
        <taxon>Euarchontoglires</taxon>
        <taxon>Primates</taxon>
        <taxon>Haplorrhini</taxon>
        <taxon>Catarrhini</taxon>
        <taxon>Hominidae</taxon>
        <taxon>Homo</taxon>
    </lineage>
</organism>
<gene>
    <name type="primary">LSM10</name>
</gene>
<evidence type="ECO:0000255" key="1">
    <source>
        <dbReference type="PROSITE-ProRule" id="PRU01346"/>
    </source>
</evidence>
<evidence type="ECO:0000269" key="2">
    <source>
    </source>
</evidence>
<evidence type="ECO:0000269" key="3">
    <source>
    </source>
</evidence>
<evidence type="ECO:0000269" key="4">
    <source>
    </source>
</evidence>
<evidence type="ECO:0000305" key="5"/>
<evidence type="ECO:0007829" key="6">
    <source>
        <dbReference type="PDB" id="6V4X"/>
    </source>
</evidence>
<accession>Q969L4</accession>
<proteinExistence type="evidence at protein level"/>
<name>LSM10_HUMAN</name>
<reference key="1">
    <citation type="journal article" date="2001" name="EMBO J.">
        <title>Purified U7 snRNPs lack the Sm proteins D1 and D2 but contain Lsm10, a new 14 kDa Sm D1-like protein.</title>
        <authorList>
            <person name="Pillai R.S."/>
            <person name="Will C.L."/>
            <person name="Luehrmann R."/>
            <person name="Schuemperli D."/>
            <person name="Mueller B."/>
        </authorList>
    </citation>
    <scope>NUCLEOTIDE SEQUENCE [MRNA]</scope>
    <scope>IDENTIFICATION IN THE U7 SNRNP COMPLEX</scope>
    <scope>SUBCELLULAR LOCATION</scope>
    <scope>IDENTIFICATION BY MASS SPECTROMETRY</scope>
</reference>
<reference key="2">
    <citation type="journal article" date="2004" name="Genome Res.">
        <title>The status, quality, and expansion of the NIH full-length cDNA project: the Mammalian Gene Collection (MGC).</title>
        <authorList>
            <consortium name="The MGC Project Team"/>
        </authorList>
    </citation>
    <scope>NUCLEOTIDE SEQUENCE [LARGE SCALE MRNA]</scope>
    <source>
        <tissue>Eye</tissue>
    </source>
</reference>
<reference key="3">
    <citation type="journal article" date="2005" name="J. Biol. Chem.">
        <title>Toward an assembly line for U7 snRNPs: interactions of U7-specific Lsm proteins with PRMT5 and SMN complexes.</title>
        <authorList>
            <person name="Azzouz T.N."/>
            <person name="Pillai R.S."/>
            <person name="Dapp C."/>
            <person name="Chari A."/>
            <person name="Meister G."/>
            <person name="Kambach C."/>
            <person name="Fischer U."/>
            <person name="Schuemperli D."/>
        </authorList>
    </citation>
    <scope>INTERACTION WITH CLNS1A AND SMN</scope>
    <scope>LACK OF METHYLATION</scope>
</reference>
<reference key="4">
    <citation type="journal article" date="2006" name="Mol. Cell. Biol.">
        <title>ZFP100, a component of the active U7 snRNP limiting for histone pre-mRNA processing, is required for entry into S phase.</title>
        <authorList>
            <person name="Wagner E.J."/>
            <person name="Marzluff W.F."/>
        </authorList>
    </citation>
    <scope>FUNCTION</scope>
</reference>
<keyword id="KW-0002">3D-structure</keyword>
<keyword id="KW-0507">mRNA processing</keyword>
<keyword id="KW-0508">mRNA splicing</keyword>
<keyword id="KW-0539">Nucleus</keyword>
<keyword id="KW-1267">Proteomics identification</keyword>
<keyword id="KW-1185">Reference proteome</keyword>
<keyword id="KW-0687">Ribonucleoprotein</keyword>
<keyword id="KW-0694">RNA-binding</keyword>
<comment type="function">
    <text evidence="4">Appears to function in the U7 snRNP complex that is involved in histone 3'-end processing. Increases U7 snRNA levels but not histone 3'-end pre-mRNA processing activity, when overexpressed. Required for cell cycle progression from G1 to S phases. Binds specifically to U7 snRNA. Binds to the downstream cleavage product (DCP) of histone pre-mRNA in a U7 snRNP dependent manner.</text>
</comment>
<comment type="subunit">
    <text evidence="2 3">Component of the heptameric ring U7 snRNP complex, or U7 Sm protein core complex, at least composed of LSM10, LSM11, SNRPB, SNRPD3, SNRPE, SNRPF, SNRPG and U7 snRNA. Formation of the U7 snRNP is an ATP-dependent process mediated by a specialized SMN complex containing at least the Sm protein core complex and additionally, the U7-specific LSM10 and LSM11 proteins. Interacts with CLNS1A and SMN.</text>
</comment>
<comment type="interaction">
    <interactant intactId="EBI-373268">
        <id>Q969L4</id>
    </interactant>
    <interactant intactId="EBI-348239">
        <id>P62310</id>
        <label>LSM3</label>
    </interactant>
    <organismsDiffer>false</organismsDiffer>
    <experiments>6</experiments>
</comment>
<comment type="subcellular location">
    <subcellularLocation>
        <location evidence="2">Nucleus</location>
    </subcellularLocation>
</comment>
<comment type="PTM">
    <text>Not methylated. Methylation is not necessary for interaction with SMN.</text>
</comment>
<comment type="similarity">
    <text evidence="5">Belongs to the snRNP Sm proteins family.</text>
</comment>
<protein>
    <recommendedName>
        <fullName>U7 snRNA-associated Sm-like protein LSm10</fullName>
    </recommendedName>
</protein>
<dbReference type="EMBL" id="AF394685">
    <property type="protein sequence ID" value="AAL07689.1"/>
    <property type="molecule type" value="mRNA"/>
</dbReference>
<dbReference type="EMBL" id="BC007623">
    <property type="protein sequence ID" value="AAH07623.1"/>
    <property type="molecule type" value="mRNA"/>
</dbReference>
<dbReference type="CCDS" id="CCDS408.1"/>
<dbReference type="RefSeq" id="NP_116270.1">
    <property type="nucleotide sequence ID" value="NM_032881.3"/>
</dbReference>
<dbReference type="PDB" id="6V4X">
    <property type="method" value="EM"/>
    <property type="resolution" value="3.20 A"/>
    <property type="chains" value="C=1-123"/>
</dbReference>
<dbReference type="PDBsum" id="6V4X"/>
<dbReference type="EMDB" id="EMD-21050"/>
<dbReference type="SMR" id="Q969L4"/>
<dbReference type="BioGRID" id="124397">
    <property type="interactions" value="24"/>
</dbReference>
<dbReference type="ComplexPortal" id="CPX-2705">
    <property type="entry name" value="U7 small nuclear ribonucleoprotein complex"/>
</dbReference>
<dbReference type="CORUM" id="Q969L4"/>
<dbReference type="FunCoup" id="Q969L4">
    <property type="interactions" value="1086"/>
</dbReference>
<dbReference type="IntAct" id="Q969L4">
    <property type="interactions" value="10"/>
</dbReference>
<dbReference type="STRING" id="9606.ENSP00000319341"/>
<dbReference type="GlyGen" id="Q969L4">
    <property type="glycosylation" value="2 sites, 1 O-linked glycan (2 sites)"/>
</dbReference>
<dbReference type="iPTMnet" id="Q969L4"/>
<dbReference type="PhosphoSitePlus" id="Q969L4"/>
<dbReference type="BioMuta" id="LSM10"/>
<dbReference type="DMDM" id="20177959"/>
<dbReference type="jPOST" id="Q969L4"/>
<dbReference type="MassIVE" id="Q969L4"/>
<dbReference type="PaxDb" id="9606-ENSP00000319341"/>
<dbReference type="PeptideAtlas" id="Q969L4"/>
<dbReference type="ProteomicsDB" id="75789"/>
<dbReference type="Pumba" id="Q969L4"/>
<dbReference type="Antibodypedia" id="17475">
    <property type="antibodies" value="67 antibodies from 17 providers"/>
</dbReference>
<dbReference type="DNASU" id="84967"/>
<dbReference type="Ensembl" id="ENST00000315732.3">
    <property type="protein sequence ID" value="ENSP00000319341.2"/>
    <property type="gene ID" value="ENSG00000181817.6"/>
</dbReference>
<dbReference type="GeneID" id="84967"/>
<dbReference type="KEGG" id="hsa:84967"/>
<dbReference type="MANE-Select" id="ENST00000315732.3">
    <property type="protein sequence ID" value="ENSP00000319341.2"/>
    <property type="RefSeq nucleotide sequence ID" value="NM_032881.3"/>
    <property type="RefSeq protein sequence ID" value="NP_116270.1"/>
</dbReference>
<dbReference type="UCSC" id="uc001cao.1">
    <property type="organism name" value="human"/>
</dbReference>
<dbReference type="AGR" id="HGNC:17562"/>
<dbReference type="CTD" id="84967"/>
<dbReference type="DisGeNET" id="84967"/>
<dbReference type="GeneCards" id="LSM10"/>
<dbReference type="HGNC" id="HGNC:17562">
    <property type="gene designation" value="LSM10"/>
</dbReference>
<dbReference type="HPA" id="ENSG00000181817">
    <property type="expression patterns" value="Low tissue specificity"/>
</dbReference>
<dbReference type="MIM" id="617909">
    <property type="type" value="gene"/>
</dbReference>
<dbReference type="neXtProt" id="NX_Q969L4"/>
<dbReference type="OpenTargets" id="ENSG00000181817"/>
<dbReference type="PharmGKB" id="PA134977215"/>
<dbReference type="VEuPathDB" id="HostDB:ENSG00000181817"/>
<dbReference type="eggNOG" id="KOG3428">
    <property type="taxonomic scope" value="Eukaryota"/>
</dbReference>
<dbReference type="GeneTree" id="ENSGT00510000048364"/>
<dbReference type="HOGENOM" id="CLU_141832_1_0_1"/>
<dbReference type="InParanoid" id="Q969L4"/>
<dbReference type="OMA" id="IADGHMT"/>
<dbReference type="OrthoDB" id="10256176at2759"/>
<dbReference type="PAN-GO" id="Q969L4">
    <property type="GO annotations" value="5 GO annotations based on evolutionary models"/>
</dbReference>
<dbReference type="PhylomeDB" id="Q969L4"/>
<dbReference type="TreeFam" id="TF332356"/>
<dbReference type="PathwayCommons" id="Q969L4"/>
<dbReference type="Reactome" id="R-HSA-111367">
    <property type="pathway name" value="SLBP independent Processing of Histone Pre-mRNAs"/>
</dbReference>
<dbReference type="Reactome" id="R-HSA-73856">
    <property type="pathway name" value="RNA Polymerase II Transcription Termination"/>
</dbReference>
<dbReference type="Reactome" id="R-HSA-77588">
    <property type="pathway name" value="SLBP Dependent Processing of Replication-Dependent Histone Pre-mRNAs"/>
</dbReference>
<dbReference type="SignaLink" id="Q969L4"/>
<dbReference type="BioGRID-ORCS" id="84967">
    <property type="hits" value="399 hits in 1159 CRISPR screens"/>
</dbReference>
<dbReference type="ChiTaRS" id="LSM10">
    <property type="organism name" value="human"/>
</dbReference>
<dbReference type="GeneWiki" id="LSM10"/>
<dbReference type="GenomeRNAi" id="84967"/>
<dbReference type="Pharos" id="Q969L4">
    <property type="development level" value="Tbio"/>
</dbReference>
<dbReference type="PRO" id="PR:Q969L4"/>
<dbReference type="Proteomes" id="UP000005640">
    <property type="component" value="Chromosome 1"/>
</dbReference>
<dbReference type="RNAct" id="Q969L4">
    <property type="molecule type" value="protein"/>
</dbReference>
<dbReference type="Bgee" id="ENSG00000181817">
    <property type="expression patterns" value="Expressed in hindlimb stylopod muscle and 173 other cell types or tissues"/>
</dbReference>
<dbReference type="GO" id="GO:0015030">
    <property type="term" value="C:Cajal body"/>
    <property type="evidence" value="ECO:0000314"/>
    <property type="project" value="UniProtKB"/>
</dbReference>
<dbReference type="GO" id="GO:0071254">
    <property type="term" value="C:cytoplasmic U snRNP body"/>
    <property type="evidence" value="ECO:0000318"/>
    <property type="project" value="GO_Central"/>
</dbReference>
<dbReference type="GO" id="GO:0016604">
    <property type="term" value="C:nuclear body"/>
    <property type="evidence" value="ECO:0000314"/>
    <property type="project" value="HPA"/>
</dbReference>
<dbReference type="GO" id="GO:0005654">
    <property type="term" value="C:nucleoplasm"/>
    <property type="evidence" value="ECO:0000314"/>
    <property type="project" value="HPA"/>
</dbReference>
<dbReference type="GO" id="GO:0005683">
    <property type="term" value="C:U7 snRNP"/>
    <property type="evidence" value="ECO:0000314"/>
    <property type="project" value="UniProtKB"/>
</dbReference>
<dbReference type="GO" id="GO:0071208">
    <property type="term" value="F:histone pre-mRNA DCP binding"/>
    <property type="evidence" value="ECO:0000250"/>
    <property type="project" value="UniProtKB"/>
</dbReference>
<dbReference type="GO" id="GO:0071209">
    <property type="term" value="F:U7 snRNA binding"/>
    <property type="evidence" value="ECO:0000353"/>
    <property type="project" value="BHF-UCL"/>
</dbReference>
<dbReference type="GO" id="GO:0006398">
    <property type="term" value="P:mRNA 3'-end processing by stem-loop binding and cleavage"/>
    <property type="evidence" value="ECO:0000318"/>
    <property type="project" value="GO_Central"/>
</dbReference>
<dbReference type="GO" id="GO:1900087">
    <property type="term" value="P:positive regulation of G1/S transition of mitotic cell cycle"/>
    <property type="evidence" value="ECO:0000315"/>
    <property type="project" value="UniProtKB"/>
</dbReference>
<dbReference type="GO" id="GO:0008380">
    <property type="term" value="P:RNA splicing"/>
    <property type="evidence" value="ECO:0007669"/>
    <property type="project" value="UniProtKB-KW"/>
</dbReference>
<dbReference type="CDD" id="cd01733">
    <property type="entry name" value="LSm10"/>
    <property type="match status" value="1"/>
</dbReference>
<dbReference type="FunFam" id="2.30.30.100:FF:000039">
    <property type="entry name" value="U7 snRNA-associated Sm-like protein LSm10"/>
    <property type="match status" value="1"/>
</dbReference>
<dbReference type="Gene3D" id="2.30.30.100">
    <property type="match status" value="1"/>
</dbReference>
<dbReference type="InterPro" id="IPR010920">
    <property type="entry name" value="LSM_dom_sf"/>
</dbReference>
<dbReference type="InterPro" id="IPR047575">
    <property type="entry name" value="Sm"/>
</dbReference>
<dbReference type="InterPro" id="IPR001163">
    <property type="entry name" value="Sm_dom_euk/arc"/>
</dbReference>
<dbReference type="InterPro" id="IPR052840">
    <property type="entry name" value="U7_snRNA_Sm-like"/>
</dbReference>
<dbReference type="PANTHER" id="PTHR21196">
    <property type="entry name" value="U7 SNRNA-ASSOCIATED SM-LIKE PROTEIN LSM10"/>
    <property type="match status" value="1"/>
</dbReference>
<dbReference type="PANTHER" id="PTHR21196:SF1">
    <property type="entry name" value="U7 SNRNA-ASSOCIATED SM-LIKE PROTEIN LSM10"/>
    <property type="match status" value="1"/>
</dbReference>
<dbReference type="Pfam" id="PF01423">
    <property type="entry name" value="LSM"/>
    <property type="match status" value="1"/>
</dbReference>
<dbReference type="SMART" id="SM00651">
    <property type="entry name" value="Sm"/>
    <property type="match status" value="1"/>
</dbReference>
<dbReference type="SUPFAM" id="SSF50182">
    <property type="entry name" value="Sm-like ribonucleoproteins"/>
    <property type="match status" value="1"/>
</dbReference>
<dbReference type="PROSITE" id="PS52002">
    <property type="entry name" value="SM"/>
    <property type="match status" value="1"/>
</dbReference>
<sequence>MAVSHSVKERTISENSLIILLQGLQGRVTTVDLRDESVAHGRIDNVDAFMNIRLAKVTYTDRWGHQVKLDDLFVTGRNVRYVHIPDDVNITSTIEQQLQIIHRVRNFGGKGQGRWEFPPKNCK</sequence>